<evidence type="ECO:0000255" key="1">
    <source>
        <dbReference type="HAMAP-Rule" id="MF_00203"/>
    </source>
</evidence>
<name>UVRC_OENOB</name>
<feature type="chain" id="PRO_1000077815" description="UvrABC system protein C">
    <location>
        <begin position="1"/>
        <end position="607"/>
    </location>
</feature>
<feature type="domain" description="GIY-YIG" evidence="1">
    <location>
        <begin position="15"/>
        <end position="92"/>
    </location>
</feature>
<feature type="domain" description="UVR" evidence="1">
    <location>
        <begin position="197"/>
        <end position="232"/>
    </location>
</feature>
<sequence length="607" mass="70042">MASELIEQKLALLPSQPGSYQMKDKNGKIIYVGKAKNLKNRVRSYFKAEHTGKTAELVANIHDFEFIVTNSDKEAFLLENTLIKRYRPYFNIRLKFSGSYPYIEITNERDPRLILANTLKHDHGTYFGPYPNVYAASETLHFLEMTYPLRRCNGYQGRPCLYYSMGQCLGACWRTVPQEEYQKNIDAITRFLNGETGKAISDIKKKMKRASDSTEYELAADFRDRLKFIDQTVESQRVLQNDHTPRDLFNFYMDKGWMTIEIFFLRQGRLLRQQKETLALADSVKEELESYIQQFYSQKNAQKPKEVLVPKNVDTKLLAETLEIPVRTPVRGEKRDLLKLAAKNARITLEDKFRLMELNEEKTTGAMKEITDALKIPHGYRFEAFDHSNTQGSNYVSALVVFEDGLPNKNLYRRYKLRTPTGQDEAKATFEVITRRYTRLRDEGQMYPDLILMDGGEIQLHSAEAALRKLDIDIPVAAMVKNDKHQTADLLNSRGENLFLDPHSQGFYLLQRIQDEVHRFVITFHRQLRTKTNLSSRLDEIAGIGPKSRVKLMRRFGSLPKIADASIEDIEALGIGEKVATLVKVSVSAMVKSENKKIIAKRKFEKE</sequence>
<reference key="1">
    <citation type="journal article" date="2006" name="Proc. Natl. Acad. Sci. U.S.A.">
        <title>Comparative genomics of the lactic acid bacteria.</title>
        <authorList>
            <person name="Makarova K.S."/>
            <person name="Slesarev A."/>
            <person name="Wolf Y.I."/>
            <person name="Sorokin A."/>
            <person name="Mirkin B."/>
            <person name="Koonin E.V."/>
            <person name="Pavlov A."/>
            <person name="Pavlova N."/>
            <person name="Karamychev V."/>
            <person name="Polouchine N."/>
            <person name="Shakhova V."/>
            <person name="Grigoriev I."/>
            <person name="Lou Y."/>
            <person name="Rohksar D."/>
            <person name="Lucas S."/>
            <person name="Huang K."/>
            <person name="Goodstein D.M."/>
            <person name="Hawkins T."/>
            <person name="Plengvidhya V."/>
            <person name="Welker D."/>
            <person name="Hughes J."/>
            <person name="Goh Y."/>
            <person name="Benson A."/>
            <person name="Baldwin K."/>
            <person name="Lee J.-H."/>
            <person name="Diaz-Muniz I."/>
            <person name="Dosti B."/>
            <person name="Smeianov V."/>
            <person name="Wechter W."/>
            <person name="Barabote R."/>
            <person name="Lorca G."/>
            <person name="Altermann E."/>
            <person name="Barrangou R."/>
            <person name="Ganesan B."/>
            <person name="Xie Y."/>
            <person name="Rawsthorne H."/>
            <person name="Tamir D."/>
            <person name="Parker C."/>
            <person name="Breidt F."/>
            <person name="Broadbent J.R."/>
            <person name="Hutkins R."/>
            <person name="O'Sullivan D."/>
            <person name="Steele J."/>
            <person name="Unlu G."/>
            <person name="Saier M.H. Jr."/>
            <person name="Klaenhammer T."/>
            <person name="Richardson P."/>
            <person name="Kozyavkin S."/>
            <person name="Weimer B.C."/>
            <person name="Mills D.A."/>
        </authorList>
    </citation>
    <scope>NUCLEOTIDE SEQUENCE [LARGE SCALE GENOMIC DNA]</scope>
    <source>
        <strain>ATCC BAA-331 / PSU-1</strain>
    </source>
</reference>
<protein>
    <recommendedName>
        <fullName evidence="1">UvrABC system protein C</fullName>
        <shortName evidence="1">Protein UvrC</shortName>
    </recommendedName>
    <alternativeName>
        <fullName evidence="1">Excinuclease ABC subunit C</fullName>
    </alternativeName>
</protein>
<keyword id="KW-0963">Cytoplasm</keyword>
<keyword id="KW-0227">DNA damage</keyword>
<keyword id="KW-0228">DNA excision</keyword>
<keyword id="KW-0234">DNA repair</keyword>
<keyword id="KW-0267">Excision nuclease</keyword>
<keyword id="KW-1185">Reference proteome</keyword>
<keyword id="KW-0742">SOS response</keyword>
<accession>Q04EZ7</accession>
<gene>
    <name evidence="1" type="primary">uvrC</name>
    <name type="ordered locus">OEOE_1073</name>
</gene>
<proteinExistence type="inferred from homology"/>
<organism>
    <name type="scientific">Oenococcus oeni (strain ATCC BAA-331 / PSU-1)</name>
    <dbReference type="NCBI Taxonomy" id="203123"/>
    <lineage>
        <taxon>Bacteria</taxon>
        <taxon>Bacillati</taxon>
        <taxon>Bacillota</taxon>
        <taxon>Bacilli</taxon>
        <taxon>Lactobacillales</taxon>
        <taxon>Lactobacillaceae</taxon>
        <taxon>Oenococcus</taxon>
    </lineage>
</organism>
<dbReference type="EMBL" id="CP000411">
    <property type="protein sequence ID" value="ABJ56975.1"/>
    <property type="molecule type" value="Genomic_DNA"/>
</dbReference>
<dbReference type="RefSeq" id="WP_002817195.1">
    <property type="nucleotide sequence ID" value="NC_008528.1"/>
</dbReference>
<dbReference type="SMR" id="Q04EZ7"/>
<dbReference type="STRING" id="203123.OEOE_1073"/>
<dbReference type="GeneID" id="75065847"/>
<dbReference type="KEGG" id="ooe:OEOE_1073"/>
<dbReference type="eggNOG" id="COG0322">
    <property type="taxonomic scope" value="Bacteria"/>
</dbReference>
<dbReference type="HOGENOM" id="CLU_014841_3_2_9"/>
<dbReference type="Proteomes" id="UP000000774">
    <property type="component" value="Chromosome"/>
</dbReference>
<dbReference type="GO" id="GO:0005737">
    <property type="term" value="C:cytoplasm"/>
    <property type="evidence" value="ECO:0007669"/>
    <property type="project" value="UniProtKB-SubCell"/>
</dbReference>
<dbReference type="GO" id="GO:0009380">
    <property type="term" value="C:excinuclease repair complex"/>
    <property type="evidence" value="ECO:0007669"/>
    <property type="project" value="InterPro"/>
</dbReference>
<dbReference type="GO" id="GO:0003677">
    <property type="term" value="F:DNA binding"/>
    <property type="evidence" value="ECO:0007669"/>
    <property type="project" value="UniProtKB-UniRule"/>
</dbReference>
<dbReference type="GO" id="GO:0009381">
    <property type="term" value="F:excinuclease ABC activity"/>
    <property type="evidence" value="ECO:0007669"/>
    <property type="project" value="UniProtKB-UniRule"/>
</dbReference>
<dbReference type="GO" id="GO:0006289">
    <property type="term" value="P:nucleotide-excision repair"/>
    <property type="evidence" value="ECO:0007669"/>
    <property type="project" value="UniProtKB-UniRule"/>
</dbReference>
<dbReference type="GO" id="GO:0009432">
    <property type="term" value="P:SOS response"/>
    <property type="evidence" value="ECO:0007669"/>
    <property type="project" value="UniProtKB-UniRule"/>
</dbReference>
<dbReference type="CDD" id="cd10434">
    <property type="entry name" value="GIY-YIG_UvrC_Cho"/>
    <property type="match status" value="1"/>
</dbReference>
<dbReference type="FunFam" id="3.40.1440.10:FF:000001">
    <property type="entry name" value="UvrABC system protein C"/>
    <property type="match status" value="1"/>
</dbReference>
<dbReference type="Gene3D" id="1.10.150.20">
    <property type="entry name" value="5' to 3' exonuclease, C-terminal subdomain"/>
    <property type="match status" value="1"/>
</dbReference>
<dbReference type="Gene3D" id="3.40.1440.10">
    <property type="entry name" value="GIY-YIG endonuclease"/>
    <property type="match status" value="1"/>
</dbReference>
<dbReference type="Gene3D" id="3.30.420.340">
    <property type="entry name" value="UvrC, RNAse H endonuclease domain"/>
    <property type="match status" value="1"/>
</dbReference>
<dbReference type="HAMAP" id="MF_00203">
    <property type="entry name" value="UvrC"/>
    <property type="match status" value="1"/>
</dbReference>
<dbReference type="InterPro" id="IPR000305">
    <property type="entry name" value="GIY-YIG_endonuc"/>
</dbReference>
<dbReference type="InterPro" id="IPR035901">
    <property type="entry name" value="GIY-YIG_endonuc_sf"/>
</dbReference>
<dbReference type="InterPro" id="IPR047296">
    <property type="entry name" value="GIY-YIG_UvrC_Cho"/>
</dbReference>
<dbReference type="InterPro" id="IPR010994">
    <property type="entry name" value="RuvA_2-like"/>
</dbReference>
<dbReference type="InterPro" id="IPR001943">
    <property type="entry name" value="UVR_dom"/>
</dbReference>
<dbReference type="InterPro" id="IPR036876">
    <property type="entry name" value="UVR_dom_sf"/>
</dbReference>
<dbReference type="InterPro" id="IPR050066">
    <property type="entry name" value="UvrABC_protein_C"/>
</dbReference>
<dbReference type="InterPro" id="IPR004791">
    <property type="entry name" value="UvrC"/>
</dbReference>
<dbReference type="InterPro" id="IPR001162">
    <property type="entry name" value="UvrC_RNase_H_dom"/>
</dbReference>
<dbReference type="InterPro" id="IPR038476">
    <property type="entry name" value="UvrC_RNase_H_dom_sf"/>
</dbReference>
<dbReference type="NCBIfam" id="TIGR00194">
    <property type="entry name" value="uvrC"/>
    <property type="match status" value="1"/>
</dbReference>
<dbReference type="PANTHER" id="PTHR30562:SF1">
    <property type="entry name" value="UVRABC SYSTEM PROTEIN C"/>
    <property type="match status" value="1"/>
</dbReference>
<dbReference type="PANTHER" id="PTHR30562">
    <property type="entry name" value="UVRC/OXIDOREDUCTASE"/>
    <property type="match status" value="1"/>
</dbReference>
<dbReference type="Pfam" id="PF01541">
    <property type="entry name" value="GIY-YIG"/>
    <property type="match status" value="1"/>
</dbReference>
<dbReference type="Pfam" id="PF14520">
    <property type="entry name" value="HHH_5"/>
    <property type="match status" value="1"/>
</dbReference>
<dbReference type="Pfam" id="PF02151">
    <property type="entry name" value="UVR"/>
    <property type="match status" value="1"/>
</dbReference>
<dbReference type="Pfam" id="PF22920">
    <property type="entry name" value="UvrC_RNaseH"/>
    <property type="match status" value="1"/>
</dbReference>
<dbReference type="Pfam" id="PF08459">
    <property type="entry name" value="UvrC_RNaseH_dom"/>
    <property type="match status" value="1"/>
</dbReference>
<dbReference type="SMART" id="SM00465">
    <property type="entry name" value="GIYc"/>
    <property type="match status" value="1"/>
</dbReference>
<dbReference type="SUPFAM" id="SSF46600">
    <property type="entry name" value="C-terminal UvrC-binding domain of UvrB"/>
    <property type="match status" value="1"/>
</dbReference>
<dbReference type="SUPFAM" id="SSF82771">
    <property type="entry name" value="GIY-YIG endonuclease"/>
    <property type="match status" value="1"/>
</dbReference>
<dbReference type="SUPFAM" id="SSF47781">
    <property type="entry name" value="RuvA domain 2-like"/>
    <property type="match status" value="1"/>
</dbReference>
<dbReference type="PROSITE" id="PS50164">
    <property type="entry name" value="GIY_YIG"/>
    <property type="match status" value="1"/>
</dbReference>
<dbReference type="PROSITE" id="PS50151">
    <property type="entry name" value="UVR"/>
    <property type="match status" value="1"/>
</dbReference>
<dbReference type="PROSITE" id="PS50165">
    <property type="entry name" value="UVRC"/>
    <property type="match status" value="1"/>
</dbReference>
<comment type="function">
    <text evidence="1">The UvrABC repair system catalyzes the recognition and processing of DNA lesions. UvrC both incises the 5' and 3' sides of the lesion. The N-terminal half is responsible for the 3' incision and the C-terminal half is responsible for the 5' incision.</text>
</comment>
<comment type="subunit">
    <text evidence="1">Interacts with UvrB in an incision complex.</text>
</comment>
<comment type="subcellular location">
    <subcellularLocation>
        <location evidence="1">Cytoplasm</location>
    </subcellularLocation>
</comment>
<comment type="similarity">
    <text evidence="1">Belongs to the UvrC family.</text>
</comment>